<sequence>MDLLYIVAALVIFASLLIAKSKRKPKKNLPPGPPRLPIIGNLHQLGEKPHRAMVELSKTYGPLMSLKLGSVTTVVATSVETVRDVLKTYDLECCSRPYMTYPARITYNLKDLVFSPYDKYWRQVRKLTVVELYTAKRVQSFRHIREEEVASFVRFNKQAASSEETVNLSQKILKMSGSVICRIGFGINLEGSKLENTYQEIIVQAFEVLGSLAAVDYFPVIGTIIDRITGLHAKCEKVFHGIDSFFDQAIQRHIDDPSIKDDIIDLLLKMERGEGSLGEYELTREHTKGILMNILTAGIDTSAQTMTWAMTHLLANPRVMKKLQAEIREKIKNIDEITDDDVEQLDYFKLVLKETFRISPIVPVLVPRVAAKDLKIAGYDVPEKTWIHVNMWAVHMSPSIWKDPETFNPERFIDNQTDFKGLNFELLPFGSGRRMCPGMGMGLAVVHLTLINLLYRFDWKLPNGMKAEELSIEENYGLICVKKLPLEAIPVLTQWT</sequence>
<dbReference type="EC" id="1.14.-.-"/>
<dbReference type="EMBL" id="L24438">
    <property type="protein sequence ID" value="AAA19701.1"/>
    <property type="molecule type" value="mRNA"/>
</dbReference>
<dbReference type="PIR" id="T52255">
    <property type="entry name" value="T52255"/>
</dbReference>
<dbReference type="SMR" id="P49264"/>
<dbReference type="BindingDB" id="P49264"/>
<dbReference type="ChEMBL" id="CHEMBL2268013"/>
<dbReference type="OrthoDB" id="2789670at2759"/>
<dbReference type="GO" id="GO:0020037">
    <property type="term" value="F:heme binding"/>
    <property type="evidence" value="ECO:0007669"/>
    <property type="project" value="InterPro"/>
</dbReference>
<dbReference type="GO" id="GO:0005506">
    <property type="term" value="F:iron ion binding"/>
    <property type="evidence" value="ECO:0007669"/>
    <property type="project" value="InterPro"/>
</dbReference>
<dbReference type="GO" id="GO:0004497">
    <property type="term" value="F:monooxygenase activity"/>
    <property type="evidence" value="ECO:0007669"/>
    <property type="project" value="UniProtKB-KW"/>
</dbReference>
<dbReference type="GO" id="GO:0016705">
    <property type="term" value="F:oxidoreductase activity, acting on paired donors, with incorporation or reduction of molecular oxygen"/>
    <property type="evidence" value="ECO:0007669"/>
    <property type="project" value="InterPro"/>
</dbReference>
<dbReference type="CDD" id="cd11072">
    <property type="entry name" value="CYP71-like"/>
    <property type="match status" value="1"/>
</dbReference>
<dbReference type="FunFam" id="1.10.630.10:FF:000011">
    <property type="entry name" value="Cytochrome P450 83B1"/>
    <property type="match status" value="1"/>
</dbReference>
<dbReference type="Gene3D" id="1.10.630.10">
    <property type="entry name" value="Cytochrome P450"/>
    <property type="match status" value="1"/>
</dbReference>
<dbReference type="InterPro" id="IPR001128">
    <property type="entry name" value="Cyt_P450"/>
</dbReference>
<dbReference type="InterPro" id="IPR017972">
    <property type="entry name" value="Cyt_P450_CS"/>
</dbReference>
<dbReference type="InterPro" id="IPR002401">
    <property type="entry name" value="Cyt_P450_E_grp-I"/>
</dbReference>
<dbReference type="InterPro" id="IPR036396">
    <property type="entry name" value="Cyt_P450_sf"/>
</dbReference>
<dbReference type="PANTHER" id="PTHR47955:SF19">
    <property type="entry name" value="CYTOCHROME P450 71A9-LIKE ISOFORM X1"/>
    <property type="match status" value="1"/>
</dbReference>
<dbReference type="PANTHER" id="PTHR47955">
    <property type="entry name" value="CYTOCHROME P450 FAMILY 71 PROTEIN"/>
    <property type="match status" value="1"/>
</dbReference>
<dbReference type="Pfam" id="PF00067">
    <property type="entry name" value="p450"/>
    <property type="match status" value="1"/>
</dbReference>
<dbReference type="PRINTS" id="PR00463">
    <property type="entry name" value="EP450I"/>
</dbReference>
<dbReference type="PRINTS" id="PR00385">
    <property type="entry name" value="P450"/>
</dbReference>
<dbReference type="SUPFAM" id="SSF48264">
    <property type="entry name" value="Cytochrome P450"/>
    <property type="match status" value="1"/>
</dbReference>
<dbReference type="PROSITE" id="PS00086">
    <property type="entry name" value="CYTOCHROME_P450"/>
    <property type="match status" value="1"/>
</dbReference>
<accession>P49264</accession>
<proteinExistence type="evidence at transcript level"/>
<name>C71B1_THLAR</name>
<feature type="chain" id="PRO_0000052079" description="Cytochrome P450 71B1">
    <location>
        <begin position="1"/>
        <end position="496"/>
    </location>
</feature>
<feature type="binding site" description="axial binding residue" evidence="1">
    <location>
        <position position="436"/>
    </location>
    <ligand>
        <name>heme</name>
        <dbReference type="ChEBI" id="CHEBI:30413"/>
    </ligand>
    <ligandPart>
        <name>Fe</name>
        <dbReference type="ChEBI" id="CHEBI:18248"/>
    </ligandPart>
</feature>
<comment type="cofactor">
    <cofactor evidence="1">
        <name>heme</name>
        <dbReference type="ChEBI" id="CHEBI:30413"/>
    </cofactor>
</comment>
<comment type="similarity">
    <text evidence="2">Belongs to the cytochrome P450 family.</text>
</comment>
<organism>
    <name type="scientific">Thlaspi arvense</name>
    <name type="common">Field penny-cress</name>
    <dbReference type="NCBI Taxonomy" id="13288"/>
    <lineage>
        <taxon>Eukaryota</taxon>
        <taxon>Viridiplantae</taxon>
        <taxon>Streptophyta</taxon>
        <taxon>Embryophyta</taxon>
        <taxon>Tracheophyta</taxon>
        <taxon>Spermatophyta</taxon>
        <taxon>Magnoliopsida</taxon>
        <taxon>eudicotyledons</taxon>
        <taxon>Gunneridae</taxon>
        <taxon>Pentapetalae</taxon>
        <taxon>rosids</taxon>
        <taxon>malvids</taxon>
        <taxon>Brassicales</taxon>
        <taxon>Brassicaceae</taxon>
        <taxon>Thlaspideae</taxon>
        <taxon>Thlaspi</taxon>
    </lineage>
</organism>
<gene>
    <name type="primary">CYP71B1</name>
</gene>
<evidence type="ECO:0000250" key="1"/>
<evidence type="ECO:0000305" key="2"/>
<protein>
    <recommendedName>
        <fullName>Cytochrome P450 71B1</fullName>
        <ecNumber>1.14.-.-</ecNumber>
    </recommendedName>
    <alternativeName>
        <fullName>CYPLXXIB1</fullName>
    </alternativeName>
</protein>
<reference key="1">
    <citation type="journal article" date="1994" name="Plant Physiol.">
        <title>Cloning and sequencing of a full-length cDNA from Thlaspi arvense L. that encodes a cytochrome P-450.</title>
        <authorList>
            <person name="Udvardi M.K."/>
            <person name="Metzger J.D."/>
            <person name="Krishnapillai V."/>
            <person name="Peacock W.J."/>
            <person name="Dennis E.S."/>
        </authorList>
    </citation>
    <scope>NUCLEOTIDE SEQUENCE [MRNA]</scope>
    <source>
        <tissue>Shoot apex</tissue>
    </source>
</reference>
<keyword id="KW-0349">Heme</keyword>
<keyword id="KW-0408">Iron</keyword>
<keyword id="KW-0479">Metal-binding</keyword>
<keyword id="KW-0503">Monooxygenase</keyword>
<keyword id="KW-0560">Oxidoreductase</keyword>